<evidence type="ECO:0000250" key="1"/>
<evidence type="ECO:0000255" key="2"/>
<evidence type="ECO:0000305" key="3"/>
<proteinExistence type="evidence at transcript level"/>
<reference key="1">
    <citation type="journal article" date="2010" name="Mol. Phylogenet. Evol.">
        <title>Evolution of Conus peptide toxins: analysis of Conus californicus Reeve, 1844.</title>
        <authorList>
            <person name="Biggs J.S."/>
            <person name="Watkins M."/>
            <person name="Puillandre N."/>
            <person name="Ownby J.P."/>
            <person name="Lopez-Vera E."/>
            <person name="Christensen S."/>
            <person name="Moreno K.J."/>
            <person name="Bernaldez J."/>
            <person name="Licea-Navarro A."/>
            <person name="Corneli P.S."/>
            <person name="Olivera B.M."/>
        </authorList>
    </citation>
    <scope>NUCLEOTIDE SEQUENCE [GENOMIC DNA]</scope>
</reference>
<reference key="2">
    <citation type="journal article" date="2011" name="J. Exp. Biol.">
        <title>A diverse family of novel peptide toxins from an unusual cone snail, Conus californicus.</title>
        <authorList>
            <person name="Gilly W.F."/>
            <person name="Richmond T.A."/>
            <person name="Duda T.F. Jr."/>
            <person name="Elliger C."/>
            <person name="Lebaric Z."/>
            <person name="Schulz J."/>
            <person name="Bingham J.P."/>
            <person name="Sweedler J.V."/>
        </authorList>
    </citation>
    <scope>NUCLEOTIDE SEQUENCE [MRNA] OF 42-84</scope>
    <source>
        <tissue>Venom duct</tissue>
    </source>
</reference>
<organism>
    <name type="scientific">Californiconus californicus</name>
    <name type="common">California cone</name>
    <name type="synonym">Conus californicus</name>
    <dbReference type="NCBI Taxonomy" id="1736779"/>
    <lineage>
        <taxon>Eukaryota</taxon>
        <taxon>Metazoa</taxon>
        <taxon>Spiralia</taxon>
        <taxon>Lophotrochozoa</taxon>
        <taxon>Mollusca</taxon>
        <taxon>Gastropoda</taxon>
        <taxon>Caenogastropoda</taxon>
        <taxon>Neogastropoda</taxon>
        <taxon>Conoidea</taxon>
        <taxon>Conidae</taxon>
        <taxon>Californiconus</taxon>
    </lineage>
</organism>
<keyword id="KW-0102">Bromination</keyword>
<keyword id="KW-1015">Disulfide bond</keyword>
<keyword id="KW-0379">Hydroxylation</keyword>
<keyword id="KW-0872">Ion channel impairing toxin</keyword>
<keyword id="KW-0528">Neurotoxin</keyword>
<keyword id="KW-0964">Secreted</keyword>
<keyword id="KW-0732">Signal</keyword>
<keyword id="KW-0800">Toxin</keyword>
<feature type="signal peptide" evidence="2">
    <location>
        <begin position="1"/>
        <end position="19"/>
    </location>
</feature>
<feature type="propeptide" id="PRO_0000392285" evidence="3">
    <location>
        <begin position="20"/>
        <end position="42"/>
    </location>
</feature>
<feature type="peptide" id="PRO_0000392286" description="Mu-conotoxin-like Cal 12.2d">
    <location>
        <begin position="43"/>
        <end position="84"/>
    </location>
</feature>
<feature type="modified residue" description="6'-bromotryptophan" evidence="1">
    <location>
        <position position="72"/>
    </location>
</feature>
<feature type="modified residue" description="4-hydroxyproline" evidence="1">
    <location>
        <position position="77"/>
    </location>
</feature>
<feature type="modified residue" description="6'-bromotryptophan" evidence="1">
    <location>
        <position position="81"/>
    </location>
</feature>
<comment type="function">
    <text evidence="1">Mu-conotoxins block voltage-gated sodium channels. This toxin reversibly blocks voltage-gated sodium channel in cephalopods, with no alteration in the voltage dependence of sodium conductance or on the kinetics of inactivation (By similarity).</text>
</comment>
<comment type="subcellular location">
    <subcellularLocation>
        <location evidence="1">Secreted</location>
    </subcellularLocation>
</comment>
<comment type="tissue specificity">
    <text>Expressed by the venom duct.</text>
</comment>
<comment type="domain">
    <text>The cysteine framework is XII (C-C-C-C-CC-C-C).</text>
</comment>
<comment type="PTM">
    <text evidence="3">Contains 4 disulfide bonds.</text>
</comment>
<comment type="similarity">
    <text evidence="3">Belongs to the conotoxin O1 superfamily.</text>
</comment>
<dbReference type="EMBL" id="FJ959123">
    <property type="protein sequence ID" value="ADB93093.1"/>
    <property type="molecule type" value="Genomic_DNA"/>
</dbReference>
<dbReference type="EMBL" id="EU022530">
    <property type="protein sequence ID" value="ABS59787.1"/>
    <property type="molecule type" value="mRNA"/>
</dbReference>
<dbReference type="ConoServer" id="4009">
    <property type="toxin name" value="Cal12.2d precursor"/>
</dbReference>
<dbReference type="GO" id="GO:0005576">
    <property type="term" value="C:extracellular region"/>
    <property type="evidence" value="ECO:0007669"/>
    <property type="project" value="UniProtKB-SubCell"/>
</dbReference>
<dbReference type="GO" id="GO:0008200">
    <property type="term" value="F:ion channel inhibitor activity"/>
    <property type="evidence" value="ECO:0007669"/>
    <property type="project" value="InterPro"/>
</dbReference>
<dbReference type="GO" id="GO:0090729">
    <property type="term" value="F:toxin activity"/>
    <property type="evidence" value="ECO:0007669"/>
    <property type="project" value="UniProtKB-KW"/>
</dbReference>
<dbReference type="InterPro" id="IPR004214">
    <property type="entry name" value="Conotoxin"/>
</dbReference>
<dbReference type="Pfam" id="PF02950">
    <property type="entry name" value="Conotoxin"/>
    <property type="match status" value="1"/>
</dbReference>
<sequence>MKLTCVLVVLLLVLPFGDLITTSNTEDNKRGATPWQNSLKARGVCSTPEGSCVHNGCICQNAPCCHASGCNWANVCPGFLWDKN</sequence>
<accession>A7LI92</accession>
<accession>D6C4I1</accession>
<name>COCD_CONCL</name>
<protein>
    <recommendedName>
        <fullName>Mu-conotoxin-like Cal 12.2d</fullName>
    </recommendedName>
    <alternativeName>
        <fullName>Conotoxin CalTx 12.2.1D</fullName>
    </alternativeName>
    <alternativeName>
        <fullName>Conotoxin Cl12.1</fullName>
    </alternativeName>
</protein>